<name>LIND_SPHIU</name>
<sequence length="346" mass="38416">MSADTETLARKVREEVIKPEQSTLISPDRQSPSLLRREATVEPRFELFHFVFSVCSQKVRGTLMEKGVTFGSNELTILPPQNENYCPQYVRLRLRSEAAAKHRPVSSFTGQSSVDSEGFDPLVVPTLVDHETGRILADSKAICLYLCDALSGGTDLLPADIREAVLKQVQLADTTPHVALLYGADPDGDRRPESMQAVMPGIHAHKIDAVRRNIPLADGDPLLLEAYQHKIVKEEAAASFVINEPQMRTAISKAEQLVTDLDRDLGASTGPWLFGDRFTLADLFWAVSLYRFLWLGYSGFWKDGAGKPRVEAYANRLFARPSVKDAIIQWPGHPPSENVIHLLSNA</sequence>
<reference key="1">
    <citation type="journal article" date="1998" name="J. Bacteriol.">
        <title>Cloning and sequencing of a 2,5-dichlorohydroquinone reductive dehalogenase gene whose product is involved in degradation of gamma-hexachlorocyclohexane by Sphingomonas paucimobilis.</title>
        <authorList>
            <person name="Miyauchi K."/>
            <person name="Suh S.-K."/>
            <person name="Nagata Y."/>
            <person name="Takagi M."/>
        </authorList>
    </citation>
    <scope>NUCLEOTIDE SEQUENCE [GENOMIC DNA]</scope>
    <scope>FUNCTION</scope>
    <scope>CATALYTIC ACTIVITY</scope>
    <scope>PATHWAY</scope>
    <scope>INDUCTION</scope>
    <source>
        <strain>DSM 16413 / CCM 7287 / MTCC 6362 / UT26 / NBRC 101211 / UT26S</strain>
    </source>
</reference>
<reference key="2">
    <citation type="journal article" date="2010" name="J. Bacteriol.">
        <title>Complete genome sequence of the representative gamma-hexachlorocyclohexane-degrading bacterium Sphingobium japonicum UT26.</title>
        <authorList>
            <person name="Nagata Y."/>
            <person name="Ohtsubo Y."/>
            <person name="Endo R."/>
            <person name="Ichikawa N."/>
            <person name="Ankai A."/>
            <person name="Oguchi A."/>
            <person name="Fukui S."/>
            <person name="Fujita N."/>
            <person name="Tsuda M."/>
        </authorList>
    </citation>
    <scope>NUCLEOTIDE SEQUENCE [LARGE SCALE GENOMIC DNA]</scope>
    <source>
        <strain>DSM 16413 / CCM 7287 / MTCC 6362 / UT26 / NBRC 101211 / UT26S</strain>
    </source>
</reference>
<evidence type="ECO:0000255" key="1">
    <source>
        <dbReference type="PROSITE-ProRule" id="PRU00684"/>
    </source>
</evidence>
<evidence type="ECO:0000255" key="2">
    <source>
        <dbReference type="PROSITE-ProRule" id="PRU00685"/>
    </source>
</evidence>
<evidence type="ECO:0000269" key="3">
    <source>
    </source>
</evidence>
<evidence type="ECO:0000303" key="4">
    <source>
    </source>
</evidence>
<evidence type="ECO:0000305" key="5"/>
<evidence type="ECO:0000305" key="6">
    <source>
    </source>
</evidence>
<evidence type="ECO:0000312" key="7">
    <source>
        <dbReference type="EMBL" id="BAI99091.1"/>
    </source>
</evidence>
<evidence type="ECO:0000312" key="8">
    <source>
        <dbReference type="Proteomes" id="UP000007753"/>
    </source>
</evidence>
<gene>
    <name evidence="4" type="primary">linD</name>
    <name evidence="7" type="ordered locus">SJA_P1-01390</name>
</gene>
<proteinExistence type="evidence at protein level"/>
<geneLocation type="plasmid" evidence="7 8">
    <name>pCHQ1</name>
</geneLocation>
<keyword id="KW-0058">Aromatic hydrocarbons catabolism</keyword>
<keyword id="KW-0216">Detoxification</keyword>
<keyword id="KW-0614">Plasmid</keyword>
<keyword id="KW-1185">Reference proteome</keyword>
<keyword id="KW-0808">Transferase</keyword>
<protein>
    <recommendedName>
        <fullName evidence="4">2,5-dichlorohydroquinone reductive dechlorinase</fullName>
        <shortName evidence="4">2,5-DCHQ dechlorinase</shortName>
        <ecNumber evidence="3">2.5.1.-</ecNumber>
    </recommendedName>
    <alternativeName>
        <fullName evidence="4">Glutathione-dependent reductive dehalogenase</fullName>
    </alternativeName>
</protein>
<accession>D4Z909</accession>
<accession>P95806</accession>
<comment type="function">
    <text evidence="3">Catalyzes the degradation of 2,5-dichlorohydroquinone (2,5-DCHQ) into hydroquinone (HQ) via chlorohydroquinone (CHQ). Is involved in the degradation pathway that allows S.japonicum UT26 to grow on gamma-hexachlorocyclohexane (gamma-HCH or lindane) as the sole source of carbon and energy. However, the conversion of CHQ to HQ by LinD seems not to be essential for this degradation pathway, because the conversion rate of CHQ to HQ is much lower than that of 2,5-DCHQ to CHQ. CHQ is more efficiently degraded by LinE in strain UT26.</text>
</comment>
<comment type="catalytic activity">
    <reaction evidence="3">
        <text>2,5-dichlorohydroquinone + 2 glutathione = chlorohydroquinone + glutathione disulfide + chloride + H(+)</text>
        <dbReference type="Rhea" id="RHEA:53012"/>
        <dbReference type="ChEBI" id="CHEBI:15378"/>
        <dbReference type="ChEBI" id="CHEBI:17996"/>
        <dbReference type="ChEBI" id="CHEBI:27545"/>
        <dbReference type="ChEBI" id="CHEBI:27675"/>
        <dbReference type="ChEBI" id="CHEBI:57925"/>
        <dbReference type="ChEBI" id="CHEBI:58297"/>
    </reaction>
</comment>
<comment type="catalytic activity">
    <reaction evidence="3">
        <text>chlorohydroquinone + 2 glutathione = hydroquinone + glutathione disulfide + chloride + H(+)</text>
        <dbReference type="Rhea" id="RHEA:53016"/>
        <dbReference type="ChEBI" id="CHEBI:15378"/>
        <dbReference type="ChEBI" id="CHEBI:17594"/>
        <dbReference type="ChEBI" id="CHEBI:17996"/>
        <dbReference type="ChEBI" id="CHEBI:27675"/>
        <dbReference type="ChEBI" id="CHEBI:57925"/>
        <dbReference type="ChEBI" id="CHEBI:58297"/>
    </reaction>
</comment>
<comment type="pathway">
    <text evidence="6">Xenobiotic degradation; gamma-hexachlorocyclohexane degradation.</text>
</comment>
<comment type="induction">
    <text evidence="3">By 2,5-dichlorohydroquinone.</text>
</comment>
<comment type="miscellaneous">
    <text evidence="6">The mechanism of this reaction probably involves a glutathione transfer: the halogen is firstly removed through substitution with glutathione, which is then removed by displacement of the aromatic moiety by a second glutathione molecule, producing oxidized glutathione (GS-SG).</text>
</comment>
<comment type="similarity">
    <text evidence="5">Belongs to the GST superfamily.</text>
</comment>
<feature type="chain" id="PRO_0000186043" description="2,5-dichlorohydroquinone reductive dechlorinase">
    <location>
        <begin position="1"/>
        <end position="346"/>
    </location>
</feature>
<feature type="domain" description="GST N-terminal" evidence="1">
    <location>
        <begin position="43"/>
        <end position="154"/>
    </location>
</feature>
<feature type="domain" description="GST C-terminal" evidence="2">
    <location>
        <begin position="189"/>
        <end position="335"/>
    </location>
</feature>
<dbReference type="EC" id="2.5.1.-" evidence="3"/>
<dbReference type="EMBL" id="D89733">
    <property type="protein sequence ID" value="BAA14011.1"/>
    <property type="molecule type" value="Genomic_DNA"/>
</dbReference>
<dbReference type="EMBL" id="AP010805">
    <property type="protein sequence ID" value="BAI99091.1"/>
    <property type="molecule type" value="Genomic_DNA"/>
</dbReference>
<dbReference type="RefSeq" id="WP_013035740.1">
    <property type="nucleotide sequence ID" value="NC_014007.1"/>
</dbReference>
<dbReference type="SMR" id="D4Z909"/>
<dbReference type="GeneID" id="29275699"/>
<dbReference type="KEGG" id="sjp:SJA_P1-01390"/>
<dbReference type="HOGENOM" id="CLU_794411_0_0_5"/>
<dbReference type="UniPathway" id="UPA00689"/>
<dbReference type="Proteomes" id="UP000007753">
    <property type="component" value="Plasmid pCHQ1"/>
</dbReference>
<dbReference type="GO" id="GO:0016740">
    <property type="term" value="F:transferase activity"/>
    <property type="evidence" value="ECO:0007669"/>
    <property type="project" value="UniProtKB-KW"/>
</dbReference>
<dbReference type="GO" id="GO:0009056">
    <property type="term" value="P:catabolic process"/>
    <property type="evidence" value="ECO:0007669"/>
    <property type="project" value="UniProtKB-KW"/>
</dbReference>
<dbReference type="GO" id="GO:0000266">
    <property type="term" value="P:mitochondrial fission"/>
    <property type="evidence" value="ECO:0007669"/>
    <property type="project" value="TreeGrafter"/>
</dbReference>
<dbReference type="GO" id="GO:0008053">
    <property type="term" value="P:mitochondrial fusion"/>
    <property type="evidence" value="ECO:0007669"/>
    <property type="project" value="TreeGrafter"/>
</dbReference>
<dbReference type="GO" id="GO:0006626">
    <property type="term" value="P:protein targeting to mitochondrion"/>
    <property type="evidence" value="ECO:0007669"/>
    <property type="project" value="TreeGrafter"/>
</dbReference>
<dbReference type="GO" id="GO:0009636">
    <property type="term" value="P:response to toxic substance"/>
    <property type="evidence" value="ECO:0007669"/>
    <property type="project" value="UniProtKB-KW"/>
</dbReference>
<dbReference type="CDD" id="cd00299">
    <property type="entry name" value="GST_C_family"/>
    <property type="match status" value="1"/>
</dbReference>
<dbReference type="CDD" id="cd00570">
    <property type="entry name" value="GST_N_family"/>
    <property type="match status" value="1"/>
</dbReference>
<dbReference type="Gene3D" id="1.20.1050.10">
    <property type="match status" value="1"/>
</dbReference>
<dbReference type="Gene3D" id="3.40.30.10">
    <property type="entry name" value="Glutaredoxin"/>
    <property type="match status" value="1"/>
</dbReference>
<dbReference type="InterPro" id="IPR010987">
    <property type="entry name" value="Glutathione-S-Trfase_C-like"/>
</dbReference>
<dbReference type="InterPro" id="IPR036282">
    <property type="entry name" value="Glutathione-S-Trfase_C_sf"/>
</dbReference>
<dbReference type="InterPro" id="IPR004045">
    <property type="entry name" value="Glutathione_S-Trfase_N"/>
</dbReference>
<dbReference type="InterPro" id="IPR036249">
    <property type="entry name" value="Thioredoxin-like_sf"/>
</dbReference>
<dbReference type="PANTHER" id="PTHR44188">
    <property type="entry name" value="GDAP1, ISOFORM A"/>
    <property type="match status" value="1"/>
</dbReference>
<dbReference type="PANTHER" id="PTHR44188:SF1">
    <property type="entry name" value="GDAP1, ISOFORM A"/>
    <property type="match status" value="1"/>
</dbReference>
<dbReference type="Pfam" id="PF13410">
    <property type="entry name" value="GST_C_2"/>
    <property type="match status" value="1"/>
</dbReference>
<dbReference type="Pfam" id="PF13409">
    <property type="entry name" value="GST_N_2"/>
    <property type="match status" value="1"/>
</dbReference>
<dbReference type="SUPFAM" id="SSF47616">
    <property type="entry name" value="GST C-terminal domain-like"/>
    <property type="match status" value="1"/>
</dbReference>
<dbReference type="SUPFAM" id="SSF52833">
    <property type="entry name" value="Thioredoxin-like"/>
    <property type="match status" value="1"/>
</dbReference>
<dbReference type="PROSITE" id="PS50405">
    <property type="entry name" value="GST_CTER"/>
    <property type="match status" value="1"/>
</dbReference>
<dbReference type="PROSITE" id="PS50404">
    <property type="entry name" value="GST_NTER"/>
    <property type="match status" value="1"/>
</dbReference>
<organism>
    <name type="scientific">Sphingobium indicum (strain DSM 16413 / CCM 7287 / MTCC 6362 / UT26 / NBRC 101211 / UT26S)</name>
    <name type="common">Sphingobium japonicum</name>
    <dbReference type="NCBI Taxonomy" id="452662"/>
    <lineage>
        <taxon>Bacteria</taxon>
        <taxon>Pseudomonadati</taxon>
        <taxon>Pseudomonadota</taxon>
        <taxon>Alphaproteobacteria</taxon>
        <taxon>Sphingomonadales</taxon>
        <taxon>Sphingomonadaceae</taxon>
        <taxon>Sphingobium</taxon>
    </lineage>
</organism>